<protein>
    <recommendedName>
        <fullName>Phenylalanyl--tRNA ligase operon leader peptide</fullName>
    </recommendedName>
    <alternativeName>
        <fullName>pheST attenuator peptide</fullName>
    </alternativeName>
</protein>
<dbReference type="EMBL" id="AL513382">
    <property type="protein sequence ID" value="CAD02016.1"/>
    <property type="molecule type" value="Genomic_DNA"/>
</dbReference>
<dbReference type="EMBL" id="AE014613">
    <property type="protein sequence ID" value="AAO68872.1"/>
    <property type="molecule type" value="Genomic_DNA"/>
</dbReference>
<dbReference type="RefSeq" id="WP_001386830.1">
    <property type="nucleotide sequence ID" value="NZ_WSUR01000011.1"/>
</dbReference>
<dbReference type="GeneID" id="98388756"/>
<dbReference type="KEGG" id="stt:t1217"/>
<dbReference type="KEGG" id="sty:STY1774"/>
<dbReference type="HOGENOM" id="CLU_222433_0_0_6"/>
<dbReference type="Proteomes" id="UP000000541">
    <property type="component" value="Chromosome"/>
</dbReference>
<dbReference type="Proteomes" id="UP000002670">
    <property type="component" value="Chromosome"/>
</dbReference>
<dbReference type="InterPro" id="IPR049616">
    <property type="entry name" value="PheM"/>
</dbReference>
<dbReference type="NCBIfam" id="NF033686">
    <property type="entry name" value="leader_PheM_1"/>
    <property type="match status" value="1"/>
</dbReference>
<keyword id="KW-0428">Leader peptide</keyword>
<accession>P0AD77</accession>
<accession>P06985</accession>
<proteinExistence type="predicted"/>
<reference key="1">
    <citation type="journal article" date="2001" name="Nature">
        <title>Complete genome sequence of a multiple drug resistant Salmonella enterica serovar Typhi CT18.</title>
        <authorList>
            <person name="Parkhill J."/>
            <person name="Dougan G."/>
            <person name="James K.D."/>
            <person name="Thomson N.R."/>
            <person name="Pickard D."/>
            <person name="Wain J."/>
            <person name="Churcher C.M."/>
            <person name="Mungall K.L."/>
            <person name="Bentley S.D."/>
            <person name="Holden M.T.G."/>
            <person name="Sebaihia M."/>
            <person name="Baker S."/>
            <person name="Basham D."/>
            <person name="Brooks K."/>
            <person name="Chillingworth T."/>
            <person name="Connerton P."/>
            <person name="Cronin A."/>
            <person name="Davis P."/>
            <person name="Davies R.M."/>
            <person name="Dowd L."/>
            <person name="White N."/>
            <person name="Farrar J."/>
            <person name="Feltwell T."/>
            <person name="Hamlin N."/>
            <person name="Haque A."/>
            <person name="Hien T.T."/>
            <person name="Holroyd S."/>
            <person name="Jagels K."/>
            <person name="Krogh A."/>
            <person name="Larsen T.S."/>
            <person name="Leather S."/>
            <person name="Moule S."/>
            <person name="O'Gaora P."/>
            <person name="Parry C."/>
            <person name="Quail M.A."/>
            <person name="Rutherford K.M."/>
            <person name="Simmonds M."/>
            <person name="Skelton J."/>
            <person name="Stevens K."/>
            <person name="Whitehead S."/>
            <person name="Barrell B.G."/>
        </authorList>
    </citation>
    <scope>NUCLEOTIDE SEQUENCE [LARGE SCALE GENOMIC DNA]</scope>
    <source>
        <strain>CT18</strain>
    </source>
</reference>
<reference key="2">
    <citation type="journal article" date="2003" name="J. Bacteriol.">
        <title>Comparative genomics of Salmonella enterica serovar Typhi strains Ty2 and CT18.</title>
        <authorList>
            <person name="Deng W."/>
            <person name="Liou S.-R."/>
            <person name="Plunkett G. III"/>
            <person name="Mayhew G.F."/>
            <person name="Rose D.J."/>
            <person name="Burland V."/>
            <person name="Kodoyianni V."/>
            <person name="Schwartz D.C."/>
            <person name="Blattner F.R."/>
        </authorList>
    </citation>
    <scope>NUCLEOTIDE SEQUENCE [LARGE SCALE GENOMIC DNA]</scope>
    <source>
        <strain>ATCC 700931 / Ty2</strain>
    </source>
</reference>
<name>LPF2_SALTI</name>
<sequence>MNAAIFRFFFYFST</sequence>
<feature type="peptide" id="PRO_0000043984" description="Phenylalanyl--tRNA ligase operon leader peptide">
    <location>
        <begin position="1"/>
        <end position="14"/>
    </location>
</feature>
<gene>
    <name type="primary">pheM</name>
    <name type="ordered locus">STY1774</name>
    <name type="ordered locus">t1217</name>
</gene>
<organism>
    <name type="scientific">Salmonella typhi</name>
    <dbReference type="NCBI Taxonomy" id="90370"/>
    <lineage>
        <taxon>Bacteria</taxon>
        <taxon>Pseudomonadati</taxon>
        <taxon>Pseudomonadota</taxon>
        <taxon>Gammaproteobacteria</taxon>
        <taxon>Enterobacterales</taxon>
        <taxon>Enterobacteriaceae</taxon>
        <taxon>Salmonella</taxon>
    </lineage>
</organism>